<gene>
    <name evidence="1" type="primary">cobQ</name>
    <name type="ordered locus">Dred_2705</name>
</gene>
<comment type="function">
    <text evidence="1">Catalyzes amidations at positions B, D, E, and G on adenosylcobyrinic A,C-diamide. NH(2) groups are provided by glutamine, and one molecule of ATP is hydrogenolyzed for each amidation.</text>
</comment>
<comment type="pathway">
    <text evidence="1">Cofactor biosynthesis; adenosylcobalamin biosynthesis.</text>
</comment>
<comment type="similarity">
    <text evidence="1">Belongs to the CobB/CobQ family. CobQ subfamily.</text>
</comment>
<reference key="1">
    <citation type="submission" date="2007-03" db="EMBL/GenBank/DDBJ databases">
        <title>Complete sequence of Desulfotomaculum reducens MI-1.</title>
        <authorList>
            <consortium name="US DOE Joint Genome Institute"/>
            <person name="Copeland A."/>
            <person name="Lucas S."/>
            <person name="Lapidus A."/>
            <person name="Barry K."/>
            <person name="Detter J.C."/>
            <person name="Glavina del Rio T."/>
            <person name="Hammon N."/>
            <person name="Israni S."/>
            <person name="Dalin E."/>
            <person name="Tice H."/>
            <person name="Pitluck S."/>
            <person name="Sims D."/>
            <person name="Brettin T."/>
            <person name="Bruce D."/>
            <person name="Han C."/>
            <person name="Tapia R."/>
            <person name="Schmutz J."/>
            <person name="Larimer F."/>
            <person name="Land M."/>
            <person name="Hauser L."/>
            <person name="Kyrpides N."/>
            <person name="Kim E."/>
            <person name="Tebo B.M."/>
            <person name="Richardson P."/>
        </authorList>
    </citation>
    <scope>NUCLEOTIDE SEQUENCE [LARGE SCALE GENOMIC DNA]</scope>
    <source>
        <strain>ATCC BAA-1160 / DSM 100696 / MI-1</strain>
    </source>
</reference>
<name>COBQ_DESRM</name>
<evidence type="ECO:0000255" key="1">
    <source>
        <dbReference type="HAMAP-Rule" id="MF_00028"/>
    </source>
</evidence>
<feature type="chain" id="PRO_0000332338" description="Cobyric acid synthase">
    <location>
        <begin position="1"/>
        <end position="512"/>
    </location>
</feature>
<feature type="domain" description="GATase cobBQ-type" evidence="1">
    <location>
        <begin position="254"/>
        <end position="455"/>
    </location>
</feature>
<feature type="active site" description="Nucleophile" evidence="1">
    <location>
        <position position="335"/>
    </location>
</feature>
<feature type="active site" evidence="1">
    <location>
        <position position="447"/>
    </location>
</feature>
<organism>
    <name type="scientific">Desulforamulus reducens (strain ATCC BAA-1160 / DSM 100696 / MI-1)</name>
    <name type="common">Desulfotomaculum reducens</name>
    <dbReference type="NCBI Taxonomy" id="349161"/>
    <lineage>
        <taxon>Bacteria</taxon>
        <taxon>Bacillati</taxon>
        <taxon>Bacillota</taxon>
        <taxon>Clostridia</taxon>
        <taxon>Eubacteriales</taxon>
        <taxon>Peptococcaceae</taxon>
        <taxon>Desulforamulus</taxon>
    </lineage>
</organism>
<sequence length="512" mass="55966">MALAKTIMIQGTSSHVGKSLLCTALCRIFKQDGFHVAPFKAQNMALNSYVTLTGGEIGRAQGAQAEAAGIAATVTMNPVLIKPKQDLNAQVVVLGKPLADMSARDYRANFLPKAVNLVGQCIEELRREFQVLVIEGAGSPAEINLKDRDIVNMRTAILADAPVILVADIDRGGVFASLVGTLELLEPHERQRVAGFIINKFRGDIELLKPGLEFLEQRTGKPVLGVIPYLHEHGIEQEDSVALEGNKNVSSGSEIDIAVVKLPRISNFTDFDLIGRVPGICLRFVCPGDPMGTPEAVILPGTKNTIEDLQYLKEKGTDQEIIELARKGIPVVGICGGYQMLGKMLYDPWGTEASLESITGLGLLDIETTFFKEKQTHRCKAKITCTELNWCGITNQEITGYEIHTGQVKLGREAKPLLQITQRSGNIVALPDGAVGNQGHIWGTHLHGLFDNKALLLSWVNSLRERKGLSRLTLAKLPDNREEKYDNLAEAVRHHLNMKQLHQMMGLGEGKP</sequence>
<dbReference type="EMBL" id="CP000612">
    <property type="protein sequence ID" value="ABO51209.1"/>
    <property type="molecule type" value="Genomic_DNA"/>
</dbReference>
<dbReference type="RefSeq" id="WP_011879006.1">
    <property type="nucleotide sequence ID" value="NC_009253.1"/>
</dbReference>
<dbReference type="SMR" id="A4J806"/>
<dbReference type="STRING" id="349161.Dred_2705"/>
<dbReference type="KEGG" id="drm:Dred_2705"/>
<dbReference type="eggNOG" id="COG1492">
    <property type="taxonomic scope" value="Bacteria"/>
</dbReference>
<dbReference type="HOGENOM" id="CLU_019250_2_2_9"/>
<dbReference type="OrthoDB" id="9808302at2"/>
<dbReference type="UniPathway" id="UPA00148"/>
<dbReference type="Proteomes" id="UP000001556">
    <property type="component" value="Chromosome"/>
</dbReference>
<dbReference type="GO" id="GO:0015420">
    <property type="term" value="F:ABC-type vitamin B12 transporter activity"/>
    <property type="evidence" value="ECO:0007669"/>
    <property type="project" value="UniProtKB-UniRule"/>
</dbReference>
<dbReference type="GO" id="GO:0003824">
    <property type="term" value="F:catalytic activity"/>
    <property type="evidence" value="ECO:0007669"/>
    <property type="project" value="InterPro"/>
</dbReference>
<dbReference type="GO" id="GO:0009236">
    <property type="term" value="P:cobalamin biosynthetic process"/>
    <property type="evidence" value="ECO:0007669"/>
    <property type="project" value="UniProtKB-UniRule"/>
</dbReference>
<dbReference type="CDD" id="cd05389">
    <property type="entry name" value="CobQ_N"/>
    <property type="match status" value="1"/>
</dbReference>
<dbReference type="CDD" id="cd01750">
    <property type="entry name" value="GATase1_CobQ"/>
    <property type="match status" value="1"/>
</dbReference>
<dbReference type="Gene3D" id="3.40.50.880">
    <property type="match status" value="1"/>
</dbReference>
<dbReference type="Gene3D" id="3.40.50.300">
    <property type="entry name" value="P-loop containing nucleotide triphosphate hydrolases"/>
    <property type="match status" value="1"/>
</dbReference>
<dbReference type="HAMAP" id="MF_00028">
    <property type="entry name" value="CobQ"/>
    <property type="match status" value="1"/>
</dbReference>
<dbReference type="InterPro" id="IPR029062">
    <property type="entry name" value="Class_I_gatase-like"/>
</dbReference>
<dbReference type="InterPro" id="IPR002586">
    <property type="entry name" value="CobQ/CobB/MinD/ParA_Nub-bd_dom"/>
</dbReference>
<dbReference type="InterPro" id="IPR033949">
    <property type="entry name" value="CobQ_GATase1"/>
</dbReference>
<dbReference type="InterPro" id="IPR047045">
    <property type="entry name" value="CobQ_N"/>
</dbReference>
<dbReference type="InterPro" id="IPR004459">
    <property type="entry name" value="CobQ_synth"/>
</dbReference>
<dbReference type="InterPro" id="IPR011698">
    <property type="entry name" value="GATase_3"/>
</dbReference>
<dbReference type="InterPro" id="IPR027417">
    <property type="entry name" value="P-loop_NTPase"/>
</dbReference>
<dbReference type="NCBIfam" id="TIGR00313">
    <property type="entry name" value="cobQ"/>
    <property type="match status" value="1"/>
</dbReference>
<dbReference type="NCBIfam" id="NF001989">
    <property type="entry name" value="PRK00784.1"/>
    <property type="match status" value="1"/>
</dbReference>
<dbReference type="PANTHER" id="PTHR21343:SF1">
    <property type="entry name" value="COBYRIC ACID SYNTHASE"/>
    <property type="match status" value="1"/>
</dbReference>
<dbReference type="PANTHER" id="PTHR21343">
    <property type="entry name" value="DETHIOBIOTIN SYNTHETASE"/>
    <property type="match status" value="1"/>
</dbReference>
<dbReference type="Pfam" id="PF01656">
    <property type="entry name" value="CbiA"/>
    <property type="match status" value="1"/>
</dbReference>
<dbReference type="Pfam" id="PF07685">
    <property type="entry name" value="GATase_3"/>
    <property type="match status" value="1"/>
</dbReference>
<dbReference type="SUPFAM" id="SSF52317">
    <property type="entry name" value="Class I glutamine amidotransferase-like"/>
    <property type="match status" value="1"/>
</dbReference>
<dbReference type="SUPFAM" id="SSF52540">
    <property type="entry name" value="P-loop containing nucleoside triphosphate hydrolases"/>
    <property type="match status" value="1"/>
</dbReference>
<dbReference type="PROSITE" id="PS51274">
    <property type="entry name" value="GATASE_COBBQ"/>
    <property type="match status" value="1"/>
</dbReference>
<proteinExistence type="inferred from homology"/>
<keyword id="KW-0169">Cobalamin biosynthesis</keyword>
<keyword id="KW-0315">Glutamine amidotransferase</keyword>
<keyword id="KW-1185">Reference proteome</keyword>
<protein>
    <recommendedName>
        <fullName evidence="1">Cobyric acid synthase</fullName>
    </recommendedName>
</protein>
<accession>A4J806</accession>